<evidence type="ECO:0000255" key="1">
    <source>
        <dbReference type="HAMAP-Rule" id="MF_02016"/>
    </source>
</evidence>
<evidence type="ECO:0000256" key="2">
    <source>
        <dbReference type="SAM" id="MobiDB-lite"/>
    </source>
</evidence>
<comment type="function">
    <text evidence="1">Murein-degrading enzyme that degrades murein glycan strands and insoluble, high-molecular weight murein sacculi, with the concomitant formation of a 1,6-anhydromuramoyl product. Lytic transglycosylases (LTs) play an integral role in the metabolism of the peptidoglycan (PG) sacculus. Their lytic action creates space within the PG sacculus to allow for its expansion as well as for the insertion of various structures such as secretion systems and flagella.</text>
</comment>
<comment type="catalytic activity">
    <reaction evidence="1">
        <text>Exolytic cleavage of the (1-&gt;4)-beta-glycosidic linkage between N-acetylmuramic acid (MurNAc) and N-acetylglucosamine (GlcNAc) residues in peptidoglycan, from either the reducing or the non-reducing ends of the peptidoglycan chains, with concomitant formation of a 1,6-anhydrobond in the MurNAc residue.</text>
        <dbReference type="EC" id="4.2.2.n1"/>
    </reaction>
</comment>
<comment type="subcellular location">
    <subcellularLocation>
        <location>Cell outer membrane</location>
        <topology>Peripheral membrane protein</topology>
    </subcellularLocation>
    <text evidence="1">Attached to the inner leaflet of the outer membrane.</text>
</comment>
<comment type="domain">
    <text evidence="1">The N-terminal domain does not have lytic activity and probably modulates enzymatic activity. The C-terminal domain is the catalytic active domain.</text>
</comment>
<comment type="similarity">
    <text evidence="1">In the N-terminal section; belongs to the bacterial solute-binding protein 3 family.</text>
</comment>
<comment type="similarity">
    <text evidence="1">In the C-terminal section; belongs to the transglycosylase Slt family.</text>
</comment>
<sequence length="514" mass="58181">MLSNNPLITKFRELFTVALVLALLSGCQWQDDNLTDLEKIRESGVIRVGTLNNQLSYYIGNDGPTGLDYELAQRFAQKLGVKLEMQPMFTLSGLFPTLERGGIDVVAAGLTISKDRIENYHAAPAYYYASQIVVYKNGQWRPRKPADLALNKGTLSVVKGSSHEKHLIKLKEIHPDLTWESIEETDSDELLRLVAKGELDFTIADSVDVALSQRIHPDVAIAMELTEDEPIAWFVNKSTDDSLYALLIEFFGEIKQSGELAQLEEKYFGHVGSFDYVDTRAFLRAIESKLPRWESLFKKYSNEFDWRLIAALSYQESHWNPQAVSPTGVRGMMMLTLPTAKSVGVKNRLDPEQSIRGGAEYLRKMISRVPDSIESHEKVWFALASYNVGFGHMMDARRLTHKQGGNQDTWTDVKQRLPLLRQRKYYQQSRYGYARGDEALNYVENIRRYYQSIIGYEQAHSHDYDSDDVQVVDGLQTITLPPVPPRQANVDGSLNNEAAISSAEKTIEDPGPSQ</sequence>
<feature type="signal peptide" evidence="1">
    <location>
        <begin position="1"/>
        <end position="30"/>
    </location>
</feature>
<feature type="chain" id="PRO_0000353953" description="Membrane-bound lytic murein transglycosylase F">
    <location>
        <begin position="31"/>
        <end position="514"/>
    </location>
</feature>
<feature type="region of interest" description="Non-LT domain" evidence="1">
    <location>
        <begin position="31"/>
        <end position="271"/>
    </location>
</feature>
<feature type="region of interest" description="LT domain" evidence="1">
    <location>
        <begin position="272"/>
        <end position="514"/>
    </location>
</feature>
<feature type="region of interest" description="Disordered" evidence="2">
    <location>
        <begin position="482"/>
        <end position="514"/>
    </location>
</feature>
<feature type="compositionally biased region" description="Polar residues" evidence="2">
    <location>
        <begin position="490"/>
        <end position="499"/>
    </location>
</feature>
<feature type="active site" evidence="1">
    <location>
        <position position="316"/>
    </location>
</feature>
<proteinExistence type="inferred from homology"/>
<dbReference type="EC" id="4.2.2.n1" evidence="1"/>
<dbReference type="EMBL" id="CR378665">
    <property type="protein sequence ID" value="CAG19200.1"/>
    <property type="molecule type" value="Genomic_DNA"/>
</dbReference>
<dbReference type="RefSeq" id="WP_011217542.1">
    <property type="nucleotide sequence ID" value="NC_006370.1"/>
</dbReference>
<dbReference type="SMR" id="Q6LU25"/>
<dbReference type="STRING" id="298386.PBPRA0787"/>
<dbReference type="CAZy" id="GH23">
    <property type="family name" value="Glycoside Hydrolase Family 23"/>
</dbReference>
<dbReference type="KEGG" id="ppr:PBPRA0787"/>
<dbReference type="eggNOG" id="COG4623">
    <property type="taxonomic scope" value="Bacteria"/>
</dbReference>
<dbReference type="HOGENOM" id="CLU_027494_0_1_6"/>
<dbReference type="Proteomes" id="UP000000593">
    <property type="component" value="Chromosome 1"/>
</dbReference>
<dbReference type="GO" id="GO:0009279">
    <property type="term" value="C:cell outer membrane"/>
    <property type="evidence" value="ECO:0007669"/>
    <property type="project" value="UniProtKB-SubCell"/>
</dbReference>
<dbReference type="GO" id="GO:0008933">
    <property type="term" value="F:peptidoglycan lytic transglycosylase activity"/>
    <property type="evidence" value="ECO:0007669"/>
    <property type="project" value="UniProtKB-UniRule"/>
</dbReference>
<dbReference type="GO" id="GO:0016998">
    <property type="term" value="P:cell wall macromolecule catabolic process"/>
    <property type="evidence" value="ECO:0007669"/>
    <property type="project" value="UniProtKB-UniRule"/>
</dbReference>
<dbReference type="GO" id="GO:0071555">
    <property type="term" value="P:cell wall organization"/>
    <property type="evidence" value="ECO:0007669"/>
    <property type="project" value="UniProtKB-KW"/>
</dbReference>
<dbReference type="GO" id="GO:0009253">
    <property type="term" value="P:peptidoglycan catabolic process"/>
    <property type="evidence" value="ECO:0007669"/>
    <property type="project" value="TreeGrafter"/>
</dbReference>
<dbReference type="CDD" id="cd13403">
    <property type="entry name" value="MLTF-like"/>
    <property type="match status" value="1"/>
</dbReference>
<dbReference type="CDD" id="cd01009">
    <property type="entry name" value="PBP2_YfhD_N"/>
    <property type="match status" value="1"/>
</dbReference>
<dbReference type="FunFam" id="1.10.530.10:FF:000003">
    <property type="entry name" value="Membrane-bound lytic murein transglycosylase F"/>
    <property type="match status" value="1"/>
</dbReference>
<dbReference type="Gene3D" id="1.10.530.10">
    <property type="match status" value="1"/>
</dbReference>
<dbReference type="Gene3D" id="3.40.190.10">
    <property type="entry name" value="Periplasmic binding protein-like II"/>
    <property type="match status" value="2"/>
</dbReference>
<dbReference type="HAMAP" id="MF_02016">
    <property type="entry name" value="MltF"/>
    <property type="match status" value="1"/>
</dbReference>
<dbReference type="InterPro" id="IPR023346">
    <property type="entry name" value="Lysozyme-like_dom_sf"/>
</dbReference>
<dbReference type="InterPro" id="IPR023703">
    <property type="entry name" value="MltF"/>
</dbReference>
<dbReference type="InterPro" id="IPR001638">
    <property type="entry name" value="Solute-binding_3/MltF_N"/>
</dbReference>
<dbReference type="InterPro" id="IPR000189">
    <property type="entry name" value="Transglyc_AS"/>
</dbReference>
<dbReference type="InterPro" id="IPR008258">
    <property type="entry name" value="Transglycosylase_SLT_dom_1"/>
</dbReference>
<dbReference type="NCBIfam" id="NF008112">
    <property type="entry name" value="PRK10859.1"/>
    <property type="match status" value="1"/>
</dbReference>
<dbReference type="PANTHER" id="PTHR35936">
    <property type="entry name" value="MEMBRANE-BOUND LYTIC MUREIN TRANSGLYCOSYLASE F"/>
    <property type="match status" value="1"/>
</dbReference>
<dbReference type="PANTHER" id="PTHR35936:SF32">
    <property type="entry name" value="MEMBRANE-BOUND LYTIC MUREIN TRANSGLYCOSYLASE F"/>
    <property type="match status" value="1"/>
</dbReference>
<dbReference type="Pfam" id="PF00497">
    <property type="entry name" value="SBP_bac_3"/>
    <property type="match status" value="1"/>
</dbReference>
<dbReference type="Pfam" id="PF01464">
    <property type="entry name" value="SLT"/>
    <property type="match status" value="1"/>
</dbReference>
<dbReference type="SMART" id="SM00062">
    <property type="entry name" value="PBPb"/>
    <property type="match status" value="1"/>
</dbReference>
<dbReference type="SUPFAM" id="SSF53955">
    <property type="entry name" value="Lysozyme-like"/>
    <property type="match status" value="1"/>
</dbReference>
<dbReference type="SUPFAM" id="SSF53850">
    <property type="entry name" value="Periplasmic binding protein-like II"/>
    <property type="match status" value="1"/>
</dbReference>
<dbReference type="PROSITE" id="PS00922">
    <property type="entry name" value="TRANSGLYCOSYLASE"/>
    <property type="match status" value="1"/>
</dbReference>
<organism>
    <name type="scientific">Photobacterium profundum (strain SS9)</name>
    <dbReference type="NCBI Taxonomy" id="298386"/>
    <lineage>
        <taxon>Bacteria</taxon>
        <taxon>Pseudomonadati</taxon>
        <taxon>Pseudomonadota</taxon>
        <taxon>Gammaproteobacteria</taxon>
        <taxon>Vibrionales</taxon>
        <taxon>Vibrionaceae</taxon>
        <taxon>Photobacterium</taxon>
    </lineage>
</organism>
<name>MLTF_PHOPR</name>
<protein>
    <recommendedName>
        <fullName evidence="1">Membrane-bound lytic murein transglycosylase F</fullName>
        <ecNumber evidence="1">4.2.2.n1</ecNumber>
    </recommendedName>
    <alternativeName>
        <fullName evidence="1">Murein lyase F</fullName>
    </alternativeName>
</protein>
<accession>Q6LU25</accession>
<gene>
    <name evidence="1" type="primary">mltF</name>
    <name type="ordered locus">PBPRA0787</name>
</gene>
<keyword id="KW-0998">Cell outer membrane</keyword>
<keyword id="KW-0961">Cell wall biogenesis/degradation</keyword>
<keyword id="KW-0456">Lyase</keyword>
<keyword id="KW-0472">Membrane</keyword>
<keyword id="KW-1185">Reference proteome</keyword>
<keyword id="KW-0732">Signal</keyword>
<reference key="1">
    <citation type="journal article" date="2005" name="Science">
        <title>Life at depth: Photobacterium profundum genome sequence and expression analysis.</title>
        <authorList>
            <person name="Vezzi A."/>
            <person name="Campanaro S."/>
            <person name="D'Angelo M."/>
            <person name="Simonato F."/>
            <person name="Vitulo N."/>
            <person name="Lauro F.M."/>
            <person name="Cestaro A."/>
            <person name="Malacrida G."/>
            <person name="Simionati B."/>
            <person name="Cannata N."/>
            <person name="Romualdi C."/>
            <person name="Bartlett D.H."/>
            <person name="Valle G."/>
        </authorList>
    </citation>
    <scope>NUCLEOTIDE SEQUENCE [LARGE SCALE GENOMIC DNA]</scope>
    <source>
        <strain>ATCC BAA-1253 / SS9</strain>
    </source>
</reference>